<comment type="function">
    <text evidence="1">Potential calcium sensor.</text>
</comment>
<comment type="interaction">
    <interactant intactId="EBI-1235938">
        <id>Q93Z27</id>
    </interactant>
    <interactant intactId="EBI-1235664">
        <id>P25854</id>
        <label>CAM4</label>
    </interactant>
    <organismsDiffer>false</organismsDiffer>
    <experiments>2</experiments>
</comment>
<comment type="caution">
    <text evidence="4">Although assigned as a calmodulin family member by Ref.4, it only contains EF-hand domains.</text>
</comment>
<comment type="sequence caution" evidence="4">
    <conflict type="erroneous initiation">
        <sequence resource="EMBL-CDS" id="BAB08899"/>
    </conflict>
</comment>
<evidence type="ECO:0000250" key="1"/>
<evidence type="ECO:0000255" key="2">
    <source>
        <dbReference type="PROSITE-ProRule" id="PRU00448"/>
    </source>
</evidence>
<evidence type="ECO:0000303" key="3">
    <source ref="4"/>
</evidence>
<evidence type="ECO:0000305" key="4"/>
<protein>
    <recommendedName>
        <fullName evidence="4">Probable calcium-binding protein CML46</fullName>
    </recommendedName>
    <alternativeName>
        <fullName evidence="3">Calmodulin-like protein 46</fullName>
    </alternativeName>
</protein>
<proteinExistence type="evidence at protein level"/>
<accession>Q93Z27</accession>
<accession>Q9FK94</accession>
<organism>
    <name type="scientific">Arabidopsis thaliana</name>
    <name type="common">Mouse-ear cress</name>
    <dbReference type="NCBI Taxonomy" id="3702"/>
    <lineage>
        <taxon>Eukaryota</taxon>
        <taxon>Viridiplantae</taxon>
        <taxon>Streptophyta</taxon>
        <taxon>Embryophyta</taxon>
        <taxon>Tracheophyta</taxon>
        <taxon>Spermatophyta</taxon>
        <taxon>Magnoliopsida</taxon>
        <taxon>eudicotyledons</taxon>
        <taxon>Gunneridae</taxon>
        <taxon>Pentapetalae</taxon>
        <taxon>rosids</taxon>
        <taxon>malvids</taxon>
        <taxon>Brassicales</taxon>
        <taxon>Brassicaceae</taxon>
        <taxon>Camelineae</taxon>
        <taxon>Arabidopsis</taxon>
    </lineage>
</organism>
<keyword id="KW-0106">Calcium</keyword>
<keyword id="KW-0479">Metal-binding</keyword>
<keyword id="KW-1185">Reference proteome</keyword>
<keyword id="KW-0677">Repeat</keyword>
<dbReference type="EMBL" id="AB012243">
    <property type="protein sequence ID" value="BAB08899.1"/>
    <property type="status" value="ALT_INIT"/>
    <property type="molecule type" value="Genomic_DNA"/>
</dbReference>
<dbReference type="EMBL" id="CP002688">
    <property type="protein sequence ID" value="AED94462.1"/>
    <property type="molecule type" value="Genomic_DNA"/>
</dbReference>
<dbReference type="EMBL" id="AY058192">
    <property type="protein sequence ID" value="AAL25605.1"/>
    <property type="molecule type" value="mRNA"/>
</dbReference>
<dbReference type="EMBL" id="AY098977">
    <property type="protein sequence ID" value="AAM19987.1"/>
    <property type="molecule type" value="mRNA"/>
</dbReference>
<dbReference type="RefSeq" id="NP_568568.1">
    <property type="nucleotide sequence ID" value="NM_123329.2"/>
</dbReference>
<dbReference type="SMR" id="Q93Z27"/>
<dbReference type="BioGRID" id="19214">
    <property type="interactions" value="6"/>
</dbReference>
<dbReference type="FunCoup" id="Q93Z27">
    <property type="interactions" value="9"/>
</dbReference>
<dbReference type="IntAct" id="Q93Z27">
    <property type="interactions" value="7"/>
</dbReference>
<dbReference type="STRING" id="3702.Q93Z27"/>
<dbReference type="PaxDb" id="3702-AT5G39670.1"/>
<dbReference type="ProteomicsDB" id="241084"/>
<dbReference type="EnsemblPlants" id="AT5G39670.1">
    <property type="protein sequence ID" value="AT5G39670.1"/>
    <property type="gene ID" value="AT5G39670"/>
</dbReference>
<dbReference type="GeneID" id="833963"/>
<dbReference type="Gramene" id="AT5G39670.1">
    <property type="protein sequence ID" value="AT5G39670.1"/>
    <property type="gene ID" value="AT5G39670"/>
</dbReference>
<dbReference type="KEGG" id="ath:AT5G39670"/>
<dbReference type="Araport" id="AT5G39670"/>
<dbReference type="TAIR" id="AT5G39670">
    <property type="gene designation" value="CML46"/>
</dbReference>
<dbReference type="eggNOG" id="KOG0027">
    <property type="taxonomic scope" value="Eukaryota"/>
</dbReference>
<dbReference type="HOGENOM" id="CLU_061288_11_0_1"/>
<dbReference type="InParanoid" id="Q93Z27"/>
<dbReference type="OMA" id="FMEASFC"/>
<dbReference type="PhylomeDB" id="Q93Z27"/>
<dbReference type="PRO" id="PR:Q93Z27"/>
<dbReference type="Proteomes" id="UP000006548">
    <property type="component" value="Chromosome 5"/>
</dbReference>
<dbReference type="ExpressionAtlas" id="Q93Z27">
    <property type="expression patterns" value="baseline and differential"/>
</dbReference>
<dbReference type="GO" id="GO:0005509">
    <property type="term" value="F:calcium ion binding"/>
    <property type="evidence" value="ECO:0007669"/>
    <property type="project" value="InterPro"/>
</dbReference>
<dbReference type="GO" id="GO:1900425">
    <property type="term" value="P:negative regulation of defense response to bacterium"/>
    <property type="evidence" value="ECO:0000315"/>
    <property type="project" value="TAIR"/>
</dbReference>
<dbReference type="CDD" id="cd00051">
    <property type="entry name" value="EFh"/>
    <property type="match status" value="1"/>
</dbReference>
<dbReference type="FunFam" id="1.10.238.10:FF:000302">
    <property type="entry name" value="Probable calcium-binding protein CML46"/>
    <property type="match status" value="1"/>
</dbReference>
<dbReference type="Gene3D" id="1.10.238.10">
    <property type="entry name" value="EF-hand"/>
    <property type="match status" value="1"/>
</dbReference>
<dbReference type="InterPro" id="IPR011992">
    <property type="entry name" value="EF-hand-dom_pair"/>
</dbReference>
<dbReference type="InterPro" id="IPR018247">
    <property type="entry name" value="EF_Hand_1_Ca_BS"/>
</dbReference>
<dbReference type="InterPro" id="IPR002048">
    <property type="entry name" value="EF_hand_dom"/>
</dbReference>
<dbReference type="InterPro" id="IPR039647">
    <property type="entry name" value="EF_hand_pair_protein_CML-like"/>
</dbReference>
<dbReference type="PANTHER" id="PTHR10891">
    <property type="entry name" value="EF-HAND CALCIUM-BINDING DOMAIN CONTAINING PROTEIN"/>
    <property type="match status" value="1"/>
</dbReference>
<dbReference type="Pfam" id="PF13499">
    <property type="entry name" value="EF-hand_7"/>
    <property type="match status" value="1"/>
</dbReference>
<dbReference type="SMART" id="SM00054">
    <property type="entry name" value="EFh"/>
    <property type="match status" value="2"/>
</dbReference>
<dbReference type="SUPFAM" id="SSF47473">
    <property type="entry name" value="EF-hand"/>
    <property type="match status" value="1"/>
</dbReference>
<dbReference type="PROSITE" id="PS00018">
    <property type="entry name" value="EF_HAND_1"/>
    <property type="match status" value="1"/>
</dbReference>
<dbReference type="PROSITE" id="PS50222">
    <property type="entry name" value="EF_HAND_2"/>
    <property type="match status" value="3"/>
</dbReference>
<gene>
    <name evidence="3" type="primary">CML46</name>
    <name type="ordered locus">At5g39670</name>
    <name type="ORF">MIJ24.140</name>
</gene>
<reference key="1">
    <citation type="journal article" date="1998" name="DNA Res.">
        <title>Structural analysis of Arabidopsis thaliana chromosome 5. VI. Sequence features of the regions of 1,367,185 bp covered by 19 physically assigned P1 and TAC clones.</title>
        <authorList>
            <person name="Kotani H."/>
            <person name="Nakamura Y."/>
            <person name="Sato S."/>
            <person name="Asamizu E."/>
            <person name="Kaneko T."/>
            <person name="Miyajima N."/>
            <person name="Tabata S."/>
        </authorList>
    </citation>
    <scope>NUCLEOTIDE SEQUENCE [LARGE SCALE GENOMIC DNA]</scope>
    <source>
        <strain>cv. Columbia</strain>
    </source>
</reference>
<reference key="2">
    <citation type="journal article" date="2017" name="Plant J.">
        <title>Araport11: a complete reannotation of the Arabidopsis thaliana reference genome.</title>
        <authorList>
            <person name="Cheng C.Y."/>
            <person name="Krishnakumar V."/>
            <person name="Chan A.P."/>
            <person name="Thibaud-Nissen F."/>
            <person name="Schobel S."/>
            <person name="Town C.D."/>
        </authorList>
    </citation>
    <scope>GENOME REANNOTATION</scope>
    <source>
        <strain>cv. Columbia</strain>
    </source>
</reference>
<reference key="3">
    <citation type="journal article" date="2003" name="Science">
        <title>Empirical analysis of transcriptional activity in the Arabidopsis genome.</title>
        <authorList>
            <person name="Yamada K."/>
            <person name="Lim J."/>
            <person name="Dale J.M."/>
            <person name="Chen H."/>
            <person name="Shinn P."/>
            <person name="Palm C.J."/>
            <person name="Southwick A.M."/>
            <person name="Wu H.C."/>
            <person name="Kim C.J."/>
            <person name="Nguyen M."/>
            <person name="Pham P.K."/>
            <person name="Cheuk R.F."/>
            <person name="Karlin-Newmann G."/>
            <person name="Liu S.X."/>
            <person name="Lam B."/>
            <person name="Sakano H."/>
            <person name="Wu T."/>
            <person name="Yu G."/>
            <person name="Miranda M."/>
            <person name="Quach H.L."/>
            <person name="Tripp M."/>
            <person name="Chang C.H."/>
            <person name="Lee J.M."/>
            <person name="Toriumi M.J."/>
            <person name="Chan M.M."/>
            <person name="Tang C.C."/>
            <person name="Onodera C.S."/>
            <person name="Deng J.M."/>
            <person name="Akiyama K."/>
            <person name="Ansari Y."/>
            <person name="Arakawa T."/>
            <person name="Banh J."/>
            <person name="Banno F."/>
            <person name="Bowser L."/>
            <person name="Brooks S.Y."/>
            <person name="Carninci P."/>
            <person name="Chao Q."/>
            <person name="Choy N."/>
            <person name="Enju A."/>
            <person name="Goldsmith A.D."/>
            <person name="Gurjal M."/>
            <person name="Hansen N.F."/>
            <person name="Hayashizaki Y."/>
            <person name="Johnson-Hopson C."/>
            <person name="Hsuan V.W."/>
            <person name="Iida K."/>
            <person name="Karnes M."/>
            <person name="Khan S."/>
            <person name="Koesema E."/>
            <person name="Ishida J."/>
            <person name="Jiang P.X."/>
            <person name="Jones T."/>
            <person name="Kawai J."/>
            <person name="Kamiya A."/>
            <person name="Meyers C."/>
            <person name="Nakajima M."/>
            <person name="Narusaka M."/>
            <person name="Seki M."/>
            <person name="Sakurai T."/>
            <person name="Satou M."/>
            <person name="Tamse R."/>
            <person name="Vaysberg M."/>
            <person name="Wallender E.K."/>
            <person name="Wong C."/>
            <person name="Yamamura Y."/>
            <person name="Yuan S."/>
            <person name="Shinozaki K."/>
            <person name="Davis R.W."/>
            <person name="Theologis A."/>
            <person name="Ecker J.R."/>
        </authorList>
    </citation>
    <scope>NUCLEOTIDE SEQUENCE [LARGE SCALE MRNA]</scope>
    <source>
        <strain>cv. Columbia</strain>
    </source>
</reference>
<reference key="4">
    <citation type="journal article" date="2003" name="New Phytol.">
        <title>Calmodulins and related potential calcium sensors of Arabidopsis.</title>
        <authorList>
            <person name="McCormack E."/>
            <person name="Braam J."/>
        </authorList>
    </citation>
    <scope>GENE FAMILY</scope>
    <scope>NOMENCLATURE</scope>
</reference>
<sequence length="204" mass="23834">MTENQLYSFITMKSSLSKCKQSSSLSFPLFGLINFFLIGFFRWVSFAQLFFSRFWPLVQHQQCVSEKKSKDLEFQTSIKHEEYRDDDDDGLCREDVGMVMKSLGLSTDQENEGLQKQYSSKEVSNLFEEKEPSLEEVKQAFDVFDENRDGFIDPIDLQRVLTILGLKQGSNLENCRRMIRSFDGSKDGRIDFYGFVKFMENNFC</sequence>
<name>CML46_ARATH</name>
<feature type="chain" id="PRO_0000342968" description="Probable calcium-binding protein CML46">
    <location>
        <begin position="1"/>
        <end position="204"/>
    </location>
</feature>
<feature type="domain" description="EF-hand 1" evidence="2">
    <location>
        <begin position="72"/>
        <end position="106"/>
    </location>
</feature>
<feature type="domain" description="EF-hand 2" evidence="2">
    <location>
        <begin position="132"/>
        <end position="167"/>
    </location>
</feature>
<feature type="domain" description="EF-hand 3" evidence="2">
    <location>
        <begin position="170"/>
        <end position="204"/>
    </location>
</feature>
<feature type="binding site" evidence="2">
    <location>
        <position position="145"/>
    </location>
    <ligand>
        <name>Ca(2+)</name>
        <dbReference type="ChEBI" id="CHEBI:29108"/>
    </ligand>
</feature>
<feature type="binding site" evidence="2">
    <location>
        <position position="147"/>
    </location>
    <ligand>
        <name>Ca(2+)</name>
        <dbReference type="ChEBI" id="CHEBI:29108"/>
    </ligand>
</feature>
<feature type="binding site" evidence="2">
    <location>
        <position position="149"/>
    </location>
    <ligand>
        <name>Ca(2+)</name>
        <dbReference type="ChEBI" id="CHEBI:29108"/>
    </ligand>
</feature>
<feature type="binding site" evidence="2">
    <location>
        <position position="156"/>
    </location>
    <ligand>
        <name>Ca(2+)</name>
        <dbReference type="ChEBI" id="CHEBI:29108"/>
    </ligand>
</feature>